<comment type="function">
    <text evidence="1">Overproduction of CaiE stimulates the activity of CaiB and CaiD.</text>
</comment>
<comment type="pathway">
    <text evidence="1">Amine and polyamine metabolism; carnitine metabolism.</text>
</comment>
<comment type="similarity">
    <text evidence="1">Belongs to the transferase hexapeptide repeat family.</text>
</comment>
<proteinExistence type="inferred from homology"/>
<gene>
    <name evidence="1" type="primary">caiE</name>
    <name type="ordered locus">SPA0070</name>
</gene>
<protein>
    <recommendedName>
        <fullName evidence="1">Carnitine operon protein CaiE</fullName>
    </recommendedName>
</protein>
<keyword id="KW-0677">Repeat</keyword>
<keyword id="KW-0808">Transferase</keyword>
<organism>
    <name type="scientific">Salmonella paratyphi A (strain ATCC 9150 / SARB42)</name>
    <dbReference type="NCBI Taxonomy" id="295319"/>
    <lineage>
        <taxon>Bacteria</taxon>
        <taxon>Pseudomonadati</taxon>
        <taxon>Pseudomonadota</taxon>
        <taxon>Gammaproteobacteria</taxon>
        <taxon>Enterobacterales</taxon>
        <taxon>Enterobacteriaceae</taxon>
        <taxon>Salmonella</taxon>
    </lineage>
</organism>
<dbReference type="EMBL" id="CP000026">
    <property type="protein sequence ID" value="AAV76104.1"/>
    <property type="molecule type" value="Genomic_DNA"/>
</dbReference>
<dbReference type="RefSeq" id="WP_000122863.1">
    <property type="nucleotide sequence ID" value="NC_006511.1"/>
</dbReference>
<dbReference type="SMR" id="Q5PIL2"/>
<dbReference type="KEGG" id="spt:SPA0070"/>
<dbReference type="HOGENOM" id="CLU_064827_4_2_6"/>
<dbReference type="UniPathway" id="UPA00117"/>
<dbReference type="Proteomes" id="UP000008185">
    <property type="component" value="Chromosome"/>
</dbReference>
<dbReference type="GO" id="GO:0016740">
    <property type="term" value="F:transferase activity"/>
    <property type="evidence" value="ECO:0007669"/>
    <property type="project" value="UniProtKB-KW"/>
</dbReference>
<dbReference type="GO" id="GO:0009437">
    <property type="term" value="P:carnitine metabolic process"/>
    <property type="evidence" value="ECO:0007669"/>
    <property type="project" value="UniProtKB-UniRule"/>
</dbReference>
<dbReference type="CDD" id="cd04745">
    <property type="entry name" value="LbH_paaY_like"/>
    <property type="match status" value="1"/>
</dbReference>
<dbReference type="FunFam" id="2.160.10.10:FF:000012">
    <property type="entry name" value="Carnitine operon protein CaiE"/>
    <property type="match status" value="1"/>
</dbReference>
<dbReference type="Gene3D" id="2.160.10.10">
    <property type="entry name" value="Hexapeptide repeat proteins"/>
    <property type="match status" value="1"/>
</dbReference>
<dbReference type="HAMAP" id="MF_01525">
    <property type="entry name" value="CaiE"/>
    <property type="match status" value="1"/>
</dbReference>
<dbReference type="InterPro" id="IPR023446">
    <property type="entry name" value="CaiE"/>
</dbReference>
<dbReference type="InterPro" id="IPR001451">
    <property type="entry name" value="Hexapep"/>
</dbReference>
<dbReference type="InterPro" id="IPR050484">
    <property type="entry name" value="Transf_Hexapept/Carb_Anhydrase"/>
</dbReference>
<dbReference type="InterPro" id="IPR011004">
    <property type="entry name" value="Trimer_LpxA-like_sf"/>
</dbReference>
<dbReference type="NCBIfam" id="NF010150">
    <property type="entry name" value="PRK13627.1"/>
    <property type="match status" value="1"/>
</dbReference>
<dbReference type="PANTHER" id="PTHR13061">
    <property type="entry name" value="DYNACTIN SUBUNIT P25"/>
    <property type="match status" value="1"/>
</dbReference>
<dbReference type="PANTHER" id="PTHR13061:SF29">
    <property type="entry name" value="GAMMA CARBONIC ANHYDRASE-LIKE 1, MITOCHONDRIAL-RELATED"/>
    <property type="match status" value="1"/>
</dbReference>
<dbReference type="Pfam" id="PF00132">
    <property type="entry name" value="Hexapep"/>
    <property type="match status" value="2"/>
</dbReference>
<dbReference type="SUPFAM" id="SSF51161">
    <property type="entry name" value="Trimeric LpxA-like enzymes"/>
    <property type="match status" value="1"/>
</dbReference>
<evidence type="ECO:0000255" key="1">
    <source>
        <dbReference type="HAMAP-Rule" id="MF_01525"/>
    </source>
</evidence>
<evidence type="ECO:0000256" key="2">
    <source>
        <dbReference type="SAM" id="MobiDB-lite"/>
    </source>
</evidence>
<feature type="chain" id="PRO_0000068724" description="Carnitine operon protein CaiE">
    <location>
        <begin position="1"/>
        <end position="198"/>
    </location>
</feature>
<feature type="region of interest" description="Disordered" evidence="2">
    <location>
        <begin position="179"/>
        <end position="198"/>
    </location>
</feature>
<feature type="compositionally biased region" description="Basic and acidic residues" evidence="2">
    <location>
        <begin position="180"/>
        <end position="198"/>
    </location>
</feature>
<reference key="1">
    <citation type="journal article" date="2004" name="Nat. Genet.">
        <title>Comparison of genome degradation in Paratyphi A and Typhi, human-restricted serovars of Salmonella enterica that cause typhoid.</title>
        <authorList>
            <person name="McClelland M."/>
            <person name="Sanderson K.E."/>
            <person name="Clifton S.W."/>
            <person name="Latreille P."/>
            <person name="Porwollik S."/>
            <person name="Sabo A."/>
            <person name="Meyer R."/>
            <person name="Bieri T."/>
            <person name="Ozersky P."/>
            <person name="McLellan M."/>
            <person name="Harkins C.R."/>
            <person name="Wang C."/>
            <person name="Nguyen C."/>
            <person name="Berghoff A."/>
            <person name="Elliott G."/>
            <person name="Kohlberg S."/>
            <person name="Strong C."/>
            <person name="Du F."/>
            <person name="Carter J."/>
            <person name="Kremizki C."/>
            <person name="Layman D."/>
            <person name="Leonard S."/>
            <person name="Sun H."/>
            <person name="Fulton L."/>
            <person name="Nash W."/>
            <person name="Miner T."/>
            <person name="Minx P."/>
            <person name="Delehaunty K."/>
            <person name="Fronick C."/>
            <person name="Magrini V."/>
            <person name="Nhan M."/>
            <person name="Warren W."/>
            <person name="Florea L."/>
            <person name="Spieth J."/>
            <person name="Wilson R.K."/>
        </authorList>
    </citation>
    <scope>NUCLEOTIDE SEQUENCE [LARGE SCALE GENOMIC DNA]</scope>
    <source>
        <strain>ATCC 9150 / SARB42</strain>
    </source>
</reference>
<sequence>MSYYAFEGLIPVVHPDAFVHPSAVLIGDVIVGAGVYIGPLASLRGDYGRLILEAGSNLQDGCIMHGYCDTDTIVHENGHIGHGAILHGCVVGRDALVGMNSVIMDGAVIGEESIVAAMSFVKAGFQGEARQLLVGSPARVLRQVTDQELHWKRLNTKEYQDLAIRCRTGLSETKPLTQVEENRPRLKGTTDVKPKSAQ</sequence>
<accession>Q5PIL2</accession>
<name>CAIE_SALPA</name>